<keyword id="KW-0106">Calcium</keyword>
<keyword id="KW-0903">Direct protein sequencing</keyword>
<keyword id="KW-0378">Hydrolase</keyword>
<keyword id="KW-0442">Lipid degradation</keyword>
<keyword id="KW-0443">Lipid metabolism</keyword>
<keyword id="KW-0528">Neurotoxin</keyword>
<keyword id="KW-0638">Presynaptic neurotoxin</keyword>
<keyword id="KW-0964">Secreted</keyword>
<keyword id="KW-0800">Toxin</keyword>
<proteinExistence type="evidence at protein level"/>
<feature type="chain" id="PRO_0000161658" description="Phospholipase A2 1">
    <location>
        <begin position="1"/>
        <end position="27" status="greater than"/>
    </location>
</feature>
<feature type="non-terminal residue">
    <location>
        <position position="27"/>
    </location>
</feature>
<dbReference type="EC" id="3.1.1.4"/>
<dbReference type="PIR" id="A35948">
    <property type="entry name" value="A35948"/>
</dbReference>
<dbReference type="SMR" id="P21790"/>
<dbReference type="GO" id="GO:0005576">
    <property type="term" value="C:extracellular region"/>
    <property type="evidence" value="ECO:0007669"/>
    <property type="project" value="UniProtKB-SubCell"/>
</dbReference>
<dbReference type="GO" id="GO:0005509">
    <property type="term" value="F:calcium ion binding"/>
    <property type="evidence" value="ECO:0007669"/>
    <property type="project" value="InterPro"/>
</dbReference>
<dbReference type="GO" id="GO:0004623">
    <property type="term" value="F:phospholipase A2 activity"/>
    <property type="evidence" value="ECO:0007669"/>
    <property type="project" value="UniProtKB-EC"/>
</dbReference>
<dbReference type="GO" id="GO:0090729">
    <property type="term" value="F:toxin activity"/>
    <property type="evidence" value="ECO:0007669"/>
    <property type="project" value="UniProtKB-KW"/>
</dbReference>
<dbReference type="GO" id="GO:0050482">
    <property type="term" value="P:arachidonate secretion"/>
    <property type="evidence" value="ECO:0007669"/>
    <property type="project" value="InterPro"/>
</dbReference>
<dbReference type="GO" id="GO:0016042">
    <property type="term" value="P:lipid catabolic process"/>
    <property type="evidence" value="ECO:0007669"/>
    <property type="project" value="UniProtKB-KW"/>
</dbReference>
<dbReference type="GO" id="GO:0006644">
    <property type="term" value="P:phospholipid metabolic process"/>
    <property type="evidence" value="ECO:0007669"/>
    <property type="project" value="InterPro"/>
</dbReference>
<dbReference type="Gene3D" id="1.20.90.10">
    <property type="entry name" value="Phospholipase A2 domain"/>
    <property type="match status" value="1"/>
</dbReference>
<dbReference type="InterPro" id="IPR001211">
    <property type="entry name" value="PLipase_A2"/>
</dbReference>
<dbReference type="InterPro" id="IPR036444">
    <property type="entry name" value="PLipase_A2_dom_sf"/>
</dbReference>
<dbReference type="PRINTS" id="PR00389">
    <property type="entry name" value="PHPHLIPASEA2"/>
</dbReference>
<dbReference type="SUPFAM" id="SSF48619">
    <property type="entry name" value="Phospholipase A2, PLA2"/>
    <property type="match status" value="1"/>
</dbReference>
<comment type="function">
    <text>Snake venom phospholipase A2 (PLA2) that inhibits neuromuscular transmission by blocking acetylcholine release from the nerve termini. PLA2 catalyzes the calcium-dependent hydrolysis of the 2-acyl groups in 3-sn-phosphoglycerides.</text>
</comment>
<comment type="catalytic activity">
    <reaction evidence="2 3">
        <text>a 1,2-diacyl-sn-glycero-3-phosphocholine + H2O = a 1-acyl-sn-glycero-3-phosphocholine + a fatty acid + H(+)</text>
        <dbReference type="Rhea" id="RHEA:15801"/>
        <dbReference type="ChEBI" id="CHEBI:15377"/>
        <dbReference type="ChEBI" id="CHEBI:15378"/>
        <dbReference type="ChEBI" id="CHEBI:28868"/>
        <dbReference type="ChEBI" id="CHEBI:57643"/>
        <dbReference type="ChEBI" id="CHEBI:58168"/>
        <dbReference type="EC" id="3.1.1.4"/>
    </reaction>
</comment>
<comment type="cofactor">
    <cofactor evidence="1">
        <name>Ca(2+)</name>
        <dbReference type="ChEBI" id="CHEBI:29108"/>
    </cofactor>
    <text evidence="1">Binds 1 Ca(2+) ion.</text>
</comment>
<comment type="subcellular location">
    <subcellularLocation>
        <location>Secreted</location>
    </subcellularLocation>
</comment>
<comment type="tissue specificity">
    <text>Expressed by the venom gland.</text>
</comment>
<comment type="similarity">
    <text evidence="4">Belongs to the phospholipase A2 family. Group I subfamily.</text>
</comment>
<reference key="1">
    <citation type="journal article" date="1990" name="Toxicon">
        <title>Isolation and characterization of three toxic phospholipases from the venom of the coral snake Micrurus nigrocinctus.</title>
        <authorList>
            <person name="Mochca-Morales J."/>
            <person name="Martin B.M."/>
            <person name="Zamudio F.Z."/>
            <person name="Possani L.D."/>
        </authorList>
    </citation>
    <scope>PROTEIN SEQUENCE</scope>
    <source>
        <tissue>Venom</tissue>
    </source>
</reference>
<organism>
    <name type="scientific">Micrurus nigrocinctus</name>
    <name type="common">Central American coral snake</name>
    <name type="synonym">Gargantilla</name>
    <dbReference type="NCBI Taxonomy" id="8635"/>
    <lineage>
        <taxon>Eukaryota</taxon>
        <taxon>Metazoa</taxon>
        <taxon>Chordata</taxon>
        <taxon>Craniata</taxon>
        <taxon>Vertebrata</taxon>
        <taxon>Euteleostomi</taxon>
        <taxon>Lepidosauria</taxon>
        <taxon>Squamata</taxon>
        <taxon>Bifurcata</taxon>
        <taxon>Unidentata</taxon>
        <taxon>Episquamata</taxon>
        <taxon>Toxicofera</taxon>
        <taxon>Serpentes</taxon>
        <taxon>Colubroidea</taxon>
        <taxon>Elapidae</taxon>
        <taxon>Elapinae</taxon>
        <taxon>Micrurus</taxon>
    </lineage>
</organism>
<protein>
    <recommendedName>
        <fullName>Phospholipase A2 1</fullName>
        <shortName>svPLA2</shortName>
        <ecNumber>3.1.1.4</ecNumber>
    </recommendedName>
    <alternativeName>
        <fullName>Phosphatidylcholine 2-acylhydrolase</fullName>
    </alternativeName>
</protein>
<accession>P21790</accession>
<evidence type="ECO:0000250" key="1"/>
<evidence type="ECO:0000255" key="2">
    <source>
        <dbReference type="PROSITE-ProRule" id="PRU10035"/>
    </source>
</evidence>
<evidence type="ECO:0000255" key="3">
    <source>
        <dbReference type="PROSITE-ProRule" id="PRU10036"/>
    </source>
</evidence>
<evidence type="ECO:0000305" key="4"/>
<name>PA21_MICNI</name>
<sequence>NLYQFKNMIQCTTKRSVLEFMEYGCYC</sequence>